<proteinExistence type="evidence at protein level"/>
<name>PKHG5_MOUSE</name>
<evidence type="ECO:0000250" key="1"/>
<evidence type="ECO:0000250" key="2">
    <source>
        <dbReference type="UniProtKB" id="O94827"/>
    </source>
</evidence>
<evidence type="ECO:0000255" key="3">
    <source>
        <dbReference type="PROSITE-ProRule" id="PRU00062"/>
    </source>
</evidence>
<evidence type="ECO:0000255" key="4">
    <source>
        <dbReference type="PROSITE-ProRule" id="PRU00145"/>
    </source>
</evidence>
<evidence type="ECO:0000256" key="5">
    <source>
        <dbReference type="SAM" id="MobiDB-lite"/>
    </source>
</evidence>
<evidence type="ECO:0000269" key="6">
    <source>
    </source>
</evidence>
<evidence type="ECO:0000269" key="7">
    <source>
    </source>
</evidence>
<evidence type="ECO:0000269" key="8">
    <source>
    </source>
</evidence>
<evidence type="ECO:0000269" key="9">
    <source>
    </source>
</evidence>
<evidence type="ECO:0000303" key="10">
    <source>
    </source>
</evidence>
<evidence type="ECO:0000305" key="11"/>
<evidence type="ECO:0007744" key="12">
    <source>
    </source>
</evidence>
<evidence type="ECO:0007744" key="13">
    <source>
    </source>
</evidence>
<feature type="chain" id="PRO_0000307135" description="Pleckstrin homology domain-containing family G member 5">
    <location>
        <begin position="1"/>
        <end position="1073"/>
    </location>
</feature>
<feature type="domain" description="DH" evidence="3">
    <location>
        <begin position="406"/>
        <end position="598"/>
    </location>
</feature>
<feature type="domain" description="PH" evidence="4">
    <location>
        <begin position="654"/>
        <end position="754"/>
    </location>
</feature>
<feature type="region of interest" description="Disordered" evidence="5">
    <location>
        <begin position="1"/>
        <end position="28"/>
    </location>
</feature>
<feature type="region of interest" description="Disordered" evidence="5">
    <location>
        <begin position="91"/>
        <end position="135"/>
    </location>
</feature>
<feature type="region of interest" description="Disordered" evidence="5">
    <location>
        <begin position="217"/>
        <end position="261"/>
    </location>
</feature>
<feature type="region of interest" description="Disordered" evidence="5">
    <location>
        <begin position="278"/>
        <end position="309"/>
    </location>
</feature>
<feature type="region of interest" description="Disordered" evidence="5">
    <location>
        <begin position="367"/>
        <end position="388"/>
    </location>
</feature>
<feature type="region of interest" description="Disordered" evidence="5">
    <location>
        <begin position="762"/>
        <end position="818"/>
    </location>
</feature>
<feature type="region of interest" description="Disordered" evidence="5">
    <location>
        <begin position="833"/>
        <end position="873"/>
    </location>
</feature>
<feature type="region of interest" description="Disordered" evidence="5">
    <location>
        <begin position="899"/>
        <end position="925"/>
    </location>
</feature>
<feature type="region of interest" description="Disordered" evidence="5">
    <location>
        <begin position="993"/>
        <end position="1046"/>
    </location>
</feature>
<feature type="compositionally biased region" description="Basic and acidic residues" evidence="5">
    <location>
        <begin position="217"/>
        <end position="231"/>
    </location>
</feature>
<feature type="compositionally biased region" description="Basic and acidic residues" evidence="5">
    <location>
        <begin position="249"/>
        <end position="260"/>
    </location>
</feature>
<feature type="compositionally biased region" description="Acidic residues" evidence="5">
    <location>
        <begin position="367"/>
        <end position="381"/>
    </location>
</feature>
<feature type="compositionally biased region" description="Acidic residues" evidence="5">
    <location>
        <begin position="777"/>
        <end position="790"/>
    </location>
</feature>
<feature type="compositionally biased region" description="Polar residues" evidence="5">
    <location>
        <begin position="791"/>
        <end position="809"/>
    </location>
</feature>
<feature type="compositionally biased region" description="Polar residues" evidence="5">
    <location>
        <begin position="844"/>
        <end position="864"/>
    </location>
</feature>
<feature type="compositionally biased region" description="Pro residues" evidence="5">
    <location>
        <begin position="900"/>
        <end position="915"/>
    </location>
</feature>
<feature type="compositionally biased region" description="Polar residues" evidence="5">
    <location>
        <begin position="1030"/>
        <end position="1039"/>
    </location>
</feature>
<feature type="modified residue" description="Phosphothreonine" evidence="13">
    <location>
        <position position="793"/>
    </location>
</feature>
<feature type="modified residue" description="Phosphoserine" evidence="13">
    <location>
        <position position="798"/>
    </location>
</feature>
<feature type="modified residue" description="Phosphothreonine" evidence="13">
    <location>
        <position position="909"/>
    </location>
</feature>
<feature type="modified residue" description="Phosphoserine" evidence="13">
    <location>
        <position position="911"/>
    </location>
</feature>
<feature type="modified residue" description="Phosphoserine" evidence="13">
    <location>
        <position position="936"/>
    </location>
</feature>
<feature type="modified residue" description="Phosphoserine" evidence="12 13">
    <location>
        <position position="941"/>
    </location>
</feature>
<feature type="splice variant" id="VSP_028587" description="In isoform 2." evidence="10">
    <location>
        <begin position="1072"/>
        <end position="1073"/>
    </location>
</feature>
<organism>
    <name type="scientific">Mus musculus</name>
    <name type="common">Mouse</name>
    <dbReference type="NCBI Taxonomy" id="10090"/>
    <lineage>
        <taxon>Eukaryota</taxon>
        <taxon>Metazoa</taxon>
        <taxon>Chordata</taxon>
        <taxon>Craniata</taxon>
        <taxon>Vertebrata</taxon>
        <taxon>Euteleostomi</taxon>
        <taxon>Mammalia</taxon>
        <taxon>Eutheria</taxon>
        <taxon>Euarchontoglires</taxon>
        <taxon>Glires</taxon>
        <taxon>Rodentia</taxon>
        <taxon>Myomorpha</taxon>
        <taxon>Muroidea</taxon>
        <taxon>Muridae</taxon>
        <taxon>Murinae</taxon>
        <taxon>Mus</taxon>
        <taxon>Mus</taxon>
    </lineage>
</organism>
<sequence length="1073" mass="118924">MGTGPGVSGRRAAARPSSELPSPDSQLLWVGGHAHSSDSQVCHHADCQQLHHRGPLNLCETCDSKFHSTLHYDGHVRFDLPPQGSVLARNVSTRSCPPRTSPAADLEEEEEGCTDGKGDRKSAGLKISKKKARRRHTDDPSKECFTLKFDLNVDIETEIVPAMKKKSLGEVLLPVFERKGIALGKVDIYLDQSNTPLSLTFEAYRFGGHYLRVKAKPGDEGKVEQGVKDSKSLSLPALRPSGAGPPVSERVDPQSRRESSLDILAPGRRRKNMSEFLGEAGIPGHEPPAPSSCSLPVGSSGGTSSGINESWKNRAASRFSGFFSSSPSTSAFSREVDKMEQLESKLHAYSLFGLPRMPRRLRFDHDSWEEEEEDDEEDEESSGLRLEDSWRELTDGHEKLTRRQCHQQEAVWELLHTEVSYIRKLRVITNLFLCCLLNLQESGLLCEVEAERLFSNIPEIAKLHRGLWGSVMVPVLEKARRTRALLQPSDFLKGFKMFGSLFKPYIRYCMEEEGCMEYMRGLLRDNDLFRAYVTWAEKHQQCQRLKLSDMLAKPHQRLTKYPLLLKSVLRKTDDPRTKEAIVTMISSVERFIHHVNTCMRQRQERQRLAGVVSRIDAYEVVEGSNDEVDKLLKEFLHLDLTAPMPGTSPEETRQLLLEGSLRMKEGKDSKMDVYCFLFTDLLLVTKAVKKAERTKVIRPPLLVDKIVCRELRDPGSFLLIYLNEFHSAVGAYTFQASSQALCRSWVDTIYNAQNQLQQLRAQLSAQEHPGSQHLQSLEEEEDEQEEEGEESGTSAASSPTILRKSSNSLDSEHCTSDGSTETLAMVVVEPGATLSSPEFEGGPVSSQSDESSLSNTASSVTPTSELLPLGPVDGRSCSMDSAYGTLSPTSLQDFVAPHPVVEPAPVPQTPSPQPSPRLRRRTPVQLLPRPPRLLKSKSEASLLQLLSGTPAARGVPPAPSRSLSELCLISVAPGVRTQRPLQEGGPGWNGPGMCDPCHGPQLSESENRPSHMTGGPADSARRRCREMPSGTMSRVQSEPPSGVSAQHRKLTLAQLYRIRTTLLLNSTLTASEV</sequence>
<reference key="1">
    <citation type="journal article" date="2006" name="Mol. Biol. Cell">
        <title>A PDZ-binding motif as a critical determinant of Rho guanine exchange factor function and cell phenotype.</title>
        <authorList>
            <person name="Liu M."/>
            <person name="Horowitz A."/>
        </authorList>
    </citation>
    <scope>NUCLEOTIDE SEQUENCE [MRNA] (ISOFORMS 1 AND 2)</scope>
    <scope>FUNCTION</scope>
    <scope>SUBCELLULAR LOCATION</scope>
    <scope>TISSUE SPECIFICITY</scope>
    <source>
        <strain>C57BL/6J</strain>
    </source>
</reference>
<reference key="2">
    <citation type="journal article" date="2009" name="PLoS Biol.">
        <title>Lineage-specific biology revealed by a finished genome assembly of the mouse.</title>
        <authorList>
            <person name="Church D.M."/>
            <person name="Goodstadt L."/>
            <person name="Hillier L.W."/>
            <person name="Zody M.C."/>
            <person name="Goldstein S."/>
            <person name="She X."/>
            <person name="Bult C.J."/>
            <person name="Agarwala R."/>
            <person name="Cherry J.L."/>
            <person name="DiCuccio M."/>
            <person name="Hlavina W."/>
            <person name="Kapustin Y."/>
            <person name="Meric P."/>
            <person name="Maglott D."/>
            <person name="Birtle Z."/>
            <person name="Marques A.C."/>
            <person name="Graves T."/>
            <person name="Zhou S."/>
            <person name="Teague B."/>
            <person name="Potamousis K."/>
            <person name="Churas C."/>
            <person name="Place M."/>
            <person name="Herschleb J."/>
            <person name="Runnheim R."/>
            <person name="Forrest D."/>
            <person name="Amos-Landgraf J."/>
            <person name="Schwartz D.C."/>
            <person name="Cheng Z."/>
            <person name="Lindblad-Toh K."/>
            <person name="Eichler E.E."/>
            <person name="Ponting C.P."/>
        </authorList>
    </citation>
    <scope>NUCLEOTIDE SEQUENCE [LARGE SCALE GENOMIC DNA]</scope>
    <source>
        <strain>C57BL/6J</strain>
    </source>
</reference>
<reference key="3">
    <citation type="journal article" date="2003" name="DNA Res.">
        <title>Prediction of the coding sequences of mouse homologues of KIAA gene: III. The complete nucleotide sequences of 500 mouse KIAA-homologous cDNAs identified by screening of terminal sequences of cDNA clones randomly sampled from size-fractionated libraries.</title>
        <authorList>
            <person name="Okazaki N."/>
            <person name="Kikuno R."/>
            <person name="Ohara R."/>
            <person name="Inamoto S."/>
            <person name="Koseki H."/>
            <person name="Hiraoka S."/>
            <person name="Saga Y."/>
            <person name="Nagase T."/>
            <person name="Ohara O."/>
            <person name="Koga H."/>
        </authorList>
    </citation>
    <scope>NUCLEOTIDE SEQUENCE [LARGE SCALE MRNA] OF 576-1073</scope>
    <source>
        <tissue>Brain</tissue>
    </source>
</reference>
<reference key="4">
    <citation type="journal article" date="2004" name="Genome Res.">
        <title>The status, quality, and expansion of the NIH full-length cDNA project: the Mammalian Gene Collection (MGC).</title>
        <authorList>
            <consortium name="The MGC Project Team"/>
        </authorList>
    </citation>
    <scope>NUCLEOTIDE SEQUENCE [LARGE SCALE MRNA] OF 596-1073 (ISOFORM 1)</scope>
    <source>
        <strain>C57BL/6J</strain>
        <strain>FVB/N</strain>
        <tissue>Mammary gland</tissue>
        <tissue>Mammary tumor</tissue>
    </source>
</reference>
<reference key="5">
    <citation type="journal article" date="2007" name="Proc. Natl. Acad. Sci. U.S.A.">
        <title>Large-scale phosphorylation analysis of mouse liver.</title>
        <authorList>
            <person name="Villen J."/>
            <person name="Beausoleil S.A."/>
            <person name="Gerber S.A."/>
            <person name="Gygi S.P."/>
        </authorList>
    </citation>
    <scope>PHOSPHORYLATION [LARGE SCALE ANALYSIS] AT SER-941</scope>
    <scope>IDENTIFICATION BY MASS SPECTROMETRY [LARGE SCALE ANALYSIS]</scope>
    <source>
        <tissue>Liver</tissue>
    </source>
</reference>
<reference key="6">
    <citation type="journal article" date="2010" name="Cell">
        <title>A tissue-specific atlas of mouse protein phosphorylation and expression.</title>
        <authorList>
            <person name="Huttlin E.L."/>
            <person name="Jedrychowski M.P."/>
            <person name="Elias J.E."/>
            <person name="Goswami T."/>
            <person name="Rad R."/>
            <person name="Beausoleil S.A."/>
            <person name="Villen J."/>
            <person name="Haas W."/>
            <person name="Sowa M.E."/>
            <person name="Gygi S.P."/>
        </authorList>
    </citation>
    <scope>PHOSPHORYLATION [LARGE SCALE ANALYSIS] AT THR-793; SER-798; THR-909; SER-911; SER-936 AND SER-941</scope>
    <scope>IDENTIFICATION BY MASS SPECTROMETRY [LARGE SCALE ANALYSIS]</scope>
    <source>
        <tissue>Brain</tissue>
        <tissue>Brown adipose tissue</tissue>
        <tissue>Heart</tissue>
        <tissue>Kidney</tissue>
        <tissue>Lung</tissue>
        <tissue>Pancreas</tissue>
        <tissue>Spleen</tissue>
        <tissue>Testis</tissue>
    </source>
</reference>
<reference key="7">
    <citation type="journal article" date="2011" name="J. Biol. Chem.">
        <title>Rab13-dependent trafficking of RhoA is required for directional migration and angiogenesis.</title>
        <authorList>
            <person name="Wu C."/>
            <person name="Agrawal S."/>
            <person name="Vasanji A."/>
            <person name="Drazba J."/>
            <person name="Sarkaria S."/>
            <person name="Xie J."/>
            <person name="Welch C.M."/>
            <person name="Liu M."/>
            <person name="Anand-Apte B."/>
            <person name="Horowitz A."/>
        </authorList>
    </citation>
    <scope>FUNCTION IN ANGIOGENESIS</scope>
    <scope>SUBCELLULAR LOCATION</scope>
</reference>
<reference key="8">
    <citation type="journal article" date="2013" name="Hum. Mol. Genet.">
        <title>PLEKHG5 deficiency leads to an intermediate form of autosomal-recessive Charcot-Marie-Tooth disease.</title>
        <authorList>
            <person name="Azzedine H."/>
            <person name="Zavadakova P."/>
            <person name="Plante-Bordeneuve V."/>
            <person name="Vaz Pato M."/>
            <person name="Pinto N."/>
            <person name="Bartesaghi L."/>
            <person name="Zenker J."/>
            <person name="Poirot O."/>
            <person name="Bernard-Marissal N."/>
            <person name="Arnaud Gouttenoire E."/>
            <person name="Cartoni R."/>
            <person name="Title A."/>
            <person name="Venturini G."/>
            <person name="Medard J.J."/>
            <person name="Makowski E."/>
            <person name="Schoels L."/>
            <person name="Claeys K.G."/>
            <person name="Stendel C."/>
            <person name="Roos A."/>
            <person name="Weis J."/>
            <person name="Dubourg O."/>
            <person name="Leal Loureiro J."/>
            <person name="Stevanin G."/>
            <person name="Said G."/>
            <person name="Amato A."/>
            <person name="Baraban J."/>
            <person name="Leguern E."/>
            <person name="Senderek J."/>
            <person name="Rivolta C."/>
            <person name="Chrast R."/>
        </authorList>
    </citation>
    <scope>TISSUE SPECIFICITY</scope>
    <scope>DISRUPTION PHENOTYPE</scope>
    <scope>DEVELOPMENTAL STAGE</scope>
</reference>
<reference key="9">
    <citation type="journal article" date="2017" name="Nat. Commun.">
        <title>Plekhg5-regulated autophagy of synaptic vesicles reveals a pathogenic mechanism in motoneuron disease.</title>
        <authorList>
            <person name="Lueningschroer P."/>
            <person name="Binotti B."/>
            <person name="Dombert B."/>
            <person name="Heimann P."/>
            <person name="Perez-Lara A."/>
            <person name="Slotta C."/>
            <person name="Thau-Habermann N."/>
            <person name="R von Collenberg C."/>
            <person name="Karl F."/>
            <person name="Damme M."/>
            <person name="Horowitz A."/>
            <person name="Maystadt I."/>
            <person name="Fuechtbauer A."/>
            <person name="Fuechtbauer E.M."/>
            <person name="Jablonka S."/>
            <person name="Blum R."/>
            <person name="Ueceyler N."/>
            <person name="Petri S."/>
            <person name="Kaltschmidt B."/>
            <person name="Jahn R."/>
            <person name="Kaltschmidt C."/>
            <person name="Sendtner M."/>
        </authorList>
    </citation>
    <scope>FUNCTION</scope>
    <scope>DISRUPTION PHENOTYPE</scope>
</reference>
<comment type="function">
    <text evidence="2 7 9">Functions as a guanine exchange factor (GEF) for RAB26 and thus regulates autophagy of synaptic vesicles in axon terminal of motoneurons (PubMed:29084947). Involved in the control of neuronal cell differentiation. Plays a role in angiogenesis through regulation of endothelial cells chemotaxis (PubMed:21543326). Also affects the migration, adhesion, and matrix/bone degradation in macrophages and osteoclasts (By similarity).</text>
</comment>
<comment type="subunit">
    <text evidence="1">Interacts with GIPC1/synectin and RHOA.</text>
</comment>
<comment type="subcellular location">
    <subcellularLocation>
        <location evidence="6">Cytoplasm</location>
    </subcellularLocation>
    <subcellularLocation>
        <location evidence="6">Cytoplasm</location>
        <location evidence="6">Perinuclear region</location>
    </subcellularLocation>
    <subcellularLocation>
        <location evidence="6">Cell membrane</location>
    </subcellularLocation>
    <subcellularLocation>
        <location evidence="7">Cell junction</location>
    </subcellularLocation>
    <subcellularLocation>
        <location evidence="7">Cell projection</location>
        <location evidence="7">Lamellipodium</location>
    </subcellularLocation>
    <text evidence="6 7">Predominantly cytoplasmic, however when endothelial cells are stimulated with lysophosphatidic acid, PLEKHG5 is found in perinuclear regions and at the cell membrane (PubMed:16467373). Localizes at cell-cell junctions in quiescent endothelial cells, and relocalizes to cytoplasmic vesicle and the leading edge of lamellipodia in migrating endothelial cells (PubMed:21543326).</text>
</comment>
<comment type="alternative products">
    <event type="alternative splicing"/>
    <isoform>
        <id>Q66T02-1</id>
        <name>1</name>
        <name>SYX1</name>
        <sequence type="displayed"/>
    </isoform>
    <isoform>
        <id>Q66T02-2</id>
        <name>2</name>
        <name>SYX2</name>
        <sequence type="described" ref="VSP_028587"/>
    </isoform>
</comment>
<comment type="tissue specificity">
    <text evidence="6 8">Expressed in neurons and glial cells of the peripheral nervous system, with highest levels of expression in the brain and sciatic nerve endoneurium. Isoform 2 is expressed at detectable levels only in malignant cells.</text>
</comment>
<comment type="developmental stage">
    <text evidence="8">Regulated during development, with the highest level at postnatal days 10 to 14, suggesting a role in myelination of the peripheral nervous system.</text>
</comment>
<comment type="disruption phenotype">
    <text evidence="8 9">Animals develop normally and show no clear neurologic symptoms as adults. However, electrophysiologic studies indicated that mutant mice have decreased motor nerve conduction velocities and delayed compound action potentials. Mutant mice perform slightly less well than control mice in the rotarod test (PubMed:23777631). Deficient mice have no motoneuron loss during their first year. A loss of motoneurons starts at 12 months and this decrease is more prominent in 24-month-old animals. Biogenesis of autophagosomes is impaired in Plekhg5-deficient motoneurons resulting in a reduced number of retrogradely transported autophagosomes (PubMed:29084947).</text>
</comment>
<comment type="sequence caution" evidence="11">
    <conflict type="erroneous gene model prediction">
        <sequence resource="EMBL-CDS" id="CAM24581"/>
    </conflict>
</comment>
<protein>
    <recommendedName>
        <fullName>Pleckstrin homology domain-containing family G member 5</fullName>
        <shortName>PH domain-containing family G member 5</shortName>
    </recommendedName>
    <alternativeName>
        <fullName>Synectin-binding RhoA exchange factor</fullName>
        <shortName>SYX</shortName>
    </alternativeName>
</protein>
<dbReference type="EMBL" id="AY605057">
    <property type="protein sequence ID" value="AAU04953.1"/>
    <property type="molecule type" value="mRNA"/>
</dbReference>
<dbReference type="EMBL" id="AY605058">
    <property type="protein sequence ID" value="AAU04954.1"/>
    <property type="molecule type" value="mRNA"/>
</dbReference>
<dbReference type="EMBL" id="AL772240">
    <property type="protein sequence ID" value="CAM19697.1"/>
    <property type="molecule type" value="Genomic_DNA"/>
</dbReference>
<dbReference type="EMBL" id="AL611927">
    <property type="protein sequence ID" value="CAM19697.1"/>
    <property type="status" value="JOINED"/>
    <property type="molecule type" value="Genomic_DNA"/>
</dbReference>
<dbReference type="EMBL" id="AL772240">
    <property type="protein sequence ID" value="CAM19699.2"/>
    <property type="molecule type" value="Genomic_DNA"/>
</dbReference>
<dbReference type="EMBL" id="AL611927">
    <property type="protein sequence ID" value="CAM19699.2"/>
    <property type="status" value="JOINED"/>
    <property type="molecule type" value="Genomic_DNA"/>
</dbReference>
<dbReference type="EMBL" id="AL611927">
    <property type="protein sequence ID" value="CAM24581.1"/>
    <property type="status" value="ALT_SEQ"/>
    <property type="molecule type" value="Genomic_DNA"/>
</dbReference>
<dbReference type="EMBL" id="AL772240">
    <property type="protein sequence ID" value="CAM24581.1"/>
    <property type="status" value="JOINED"/>
    <property type="molecule type" value="Genomic_DNA"/>
</dbReference>
<dbReference type="EMBL" id="AL611927">
    <property type="protein sequence ID" value="CAM24582.2"/>
    <property type="molecule type" value="Genomic_DNA"/>
</dbReference>
<dbReference type="EMBL" id="AL772240">
    <property type="protein sequence ID" value="CAM24582.2"/>
    <property type="status" value="JOINED"/>
    <property type="molecule type" value="Genomic_DNA"/>
</dbReference>
<dbReference type="EMBL" id="AK129198">
    <property type="protein sequence ID" value="BAC98008.1"/>
    <property type="molecule type" value="mRNA"/>
</dbReference>
<dbReference type="EMBL" id="BC023181">
    <property type="protein sequence ID" value="AAH23181.1"/>
    <property type="molecule type" value="mRNA"/>
</dbReference>
<dbReference type="EMBL" id="BC064091">
    <property type="protein sequence ID" value="AAH64091.1"/>
    <property type="molecule type" value="mRNA"/>
</dbReference>
<dbReference type="CCDS" id="CCDS18987.2">
    <molecule id="Q66T02-1"/>
</dbReference>
<dbReference type="RefSeq" id="NP_001272928.1">
    <molecule id="Q66T02-1"/>
    <property type="nucleotide sequence ID" value="NM_001285999.3"/>
</dbReference>
<dbReference type="SMR" id="Q66T02"/>
<dbReference type="BioGRID" id="234677">
    <property type="interactions" value="28"/>
</dbReference>
<dbReference type="ELM" id="Q66T02"/>
<dbReference type="FunCoup" id="Q66T02">
    <property type="interactions" value="503"/>
</dbReference>
<dbReference type="IntAct" id="Q66T02">
    <property type="interactions" value="10"/>
</dbReference>
<dbReference type="STRING" id="10090.ENSMUSP00000101286"/>
<dbReference type="GlyGen" id="Q66T02">
    <property type="glycosylation" value="1 site"/>
</dbReference>
<dbReference type="iPTMnet" id="Q66T02"/>
<dbReference type="PhosphoSitePlus" id="Q66T02"/>
<dbReference type="jPOST" id="Q66T02"/>
<dbReference type="PaxDb" id="10090-ENSMUSP00000081132"/>
<dbReference type="ProteomicsDB" id="289511">
    <molecule id="Q66T02-1"/>
</dbReference>
<dbReference type="ProteomicsDB" id="289512">
    <molecule id="Q66T02-2"/>
</dbReference>
<dbReference type="Pumba" id="Q66T02"/>
<dbReference type="Antibodypedia" id="27380">
    <property type="antibodies" value="145 antibodies from 25 providers"/>
</dbReference>
<dbReference type="DNASU" id="269608"/>
<dbReference type="Ensembl" id="ENSMUST00000084115.4">
    <molecule id="Q66T02-2"/>
    <property type="protein sequence ID" value="ENSMUSP00000081132.4"/>
    <property type="gene ID" value="ENSMUSG00000039713.18"/>
</dbReference>
<dbReference type="Ensembl" id="ENSMUST00000105661.10">
    <molecule id="Q66T02-1"/>
    <property type="protein sequence ID" value="ENSMUSP00000101286.4"/>
    <property type="gene ID" value="ENSMUSG00000039713.18"/>
</dbReference>
<dbReference type="GeneID" id="269608"/>
<dbReference type="KEGG" id="mmu:269608"/>
<dbReference type="UCSC" id="uc008vzh.2">
    <molecule id="Q66T02-1"/>
    <property type="organism name" value="mouse"/>
</dbReference>
<dbReference type="AGR" id="MGI:2652860"/>
<dbReference type="CTD" id="57449"/>
<dbReference type="MGI" id="MGI:2652860">
    <property type="gene designation" value="Plekhg5"/>
</dbReference>
<dbReference type="VEuPathDB" id="HostDB:ENSMUSG00000039713"/>
<dbReference type="eggNOG" id="KOG3521">
    <property type="taxonomic scope" value="Eukaryota"/>
</dbReference>
<dbReference type="GeneTree" id="ENSGT00510000046843"/>
<dbReference type="InParanoid" id="Q66T02"/>
<dbReference type="OMA" id="EATYIRN"/>
<dbReference type="OrthoDB" id="660555at2759"/>
<dbReference type="PhylomeDB" id="Q66T02"/>
<dbReference type="TreeFam" id="TF316755"/>
<dbReference type="Reactome" id="R-MMU-193648">
    <property type="pathway name" value="NRAGE signals death through JNK"/>
</dbReference>
<dbReference type="Reactome" id="R-MMU-416482">
    <property type="pathway name" value="G alpha (12/13) signalling events"/>
</dbReference>
<dbReference type="Reactome" id="R-MMU-8980692">
    <property type="pathway name" value="RHOA GTPase cycle"/>
</dbReference>
<dbReference type="Reactome" id="R-MMU-9696264">
    <property type="pathway name" value="RND3 GTPase cycle"/>
</dbReference>
<dbReference type="Reactome" id="R-MMU-9696273">
    <property type="pathway name" value="RND1 GTPase cycle"/>
</dbReference>
<dbReference type="BioGRID-ORCS" id="269608">
    <property type="hits" value="7 hits in 77 CRISPR screens"/>
</dbReference>
<dbReference type="ChiTaRS" id="Plekhg5">
    <property type="organism name" value="mouse"/>
</dbReference>
<dbReference type="PRO" id="PR:Q66T02"/>
<dbReference type="Proteomes" id="UP000000589">
    <property type="component" value="Chromosome 4"/>
</dbReference>
<dbReference type="RNAct" id="Q66T02">
    <property type="molecule type" value="protein"/>
</dbReference>
<dbReference type="Bgee" id="ENSMUSG00000039713">
    <property type="expression patterns" value="Expressed in dentate gyrus of hippocampal formation granule cell and 206 other cell types or tissues"/>
</dbReference>
<dbReference type="ExpressionAtlas" id="Q66T02">
    <property type="expression patterns" value="baseline and differential"/>
</dbReference>
<dbReference type="GO" id="GO:0005911">
    <property type="term" value="C:cell-cell junction"/>
    <property type="evidence" value="ECO:0000314"/>
    <property type="project" value="UniProtKB"/>
</dbReference>
<dbReference type="GO" id="GO:0005737">
    <property type="term" value="C:cytoplasm"/>
    <property type="evidence" value="ECO:0000314"/>
    <property type="project" value="UniProtKB"/>
</dbReference>
<dbReference type="GO" id="GO:0030139">
    <property type="term" value="C:endocytic vesicle"/>
    <property type="evidence" value="ECO:0000314"/>
    <property type="project" value="UniProtKB"/>
</dbReference>
<dbReference type="GO" id="GO:0030027">
    <property type="term" value="C:lamellipodium"/>
    <property type="evidence" value="ECO:0000314"/>
    <property type="project" value="UniProtKB"/>
</dbReference>
<dbReference type="GO" id="GO:0048471">
    <property type="term" value="C:perinuclear region of cytoplasm"/>
    <property type="evidence" value="ECO:0007669"/>
    <property type="project" value="UniProtKB-SubCell"/>
</dbReference>
<dbReference type="GO" id="GO:0005886">
    <property type="term" value="C:plasma membrane"/>
    <property type="evidence" value="ECO:0000314"/>
    <property type="project" value="MGI"/>
</dbReference>
<dbReference type="GO" id="GO:0098793">
    <property type="term" value="C:presynapse"/>
    <property type="evidence" value="ECO:0007669"/>
    <property type="project" value="GOC"/>
</dbReference>
<dbReference type="GO" id="GO:0005085">
    <property type="term" value="F:guanyl-nucleotide exchange factor activity"/>
    <property type="evidence" value="ECO:0000314"/>
    <property type="project" value="MGI"/>
</dbReference>
<dbReference type="GO" id="GO:0035767">
    <property type="term" value="P:endothelial cell chemotaxis"/>
    <property type="evidence" value="ECO:0000315"/>
    <property type="project" value="UniProtKB"/>
</dbReference>
<dbReference type="GO" id="GO:0043542">
    <property type="term" value="P:endothelial cell migration"/>
    <property type="evidence" value="ECO:0000314"/>
    <property type="project" value="MGI"/>
</dbReference>
<dbReference type="GO" id="GO:0140251">
    <property type="term" value="P:regulation protein catabolic process at presynapse"/>
    <property type="evidence" value="ECO:0000314"/>
    <property type="project" value="SynGO"/>
</dbReference>
<dbReference type="CDD" id="cd13244">
    <property type="entry name" value="PH_PLEKHG5_G6"/>
    <property type="match status" value="1"/>
</dbReference>
<dbReference type="CDD" id="cd17068">
    <property type="entry name" value="RBD_PLEKHG5"/>
    <property type="match status" value="1"/>
</dbReference>
<dbReference type="CDD" id="cd00160">
    <property type="entry name" value="RhoGEF"/>
    <property type="match status" value="1"/>
</dbReference>
<dbReference type="FunFam" id="2.30.29.30:FF:000141">
    <property type="entry name" value="Pleckstrin homology domain-containing family G member 5"/>
    <property type="match status" value="1"/>
</dbReference>
<dbReference type="FunFam" id="1.20.900.10:FF:000017">
    <property type="entry name" value="pleckstrin homology domain-containing family G member 5 isoform X1"/>
    <property type="match status" value="1"/>
</dbReference>
<dbReference type="Gene3D" id="1.20.900.10">
    <property type="entry name" value="Dbl homology (DH) domain"/>
    <property type="match status" value="1"/>
</dbReference>
<dbReference type="Gene3D" id="2.30.29.30">
    <property type="entry name" value="Pleckstrin-homology domain (PH domain)/Phosphotyrosine-binding domain (PTB)"/>
    <property type="match status" value="1"/>
</dbReference>
<dbReference type="InterPro" id="IPR035899">
    <property type="entry name" value="DBL_dom_sf"/>
</dbReference>
<dbReference type="InterPro" id="IPR000219">
    <property type="entry name" value="DH_dom"/>
</dbReference>
<dbReference type="InterPro" id="IPR011993">
    <property type="entry name" value="PH-like_dom_sf"/>
</dbReference>
<dbReference type="InterPro" id="IPR001849">
    <property type="entry name" value="PH_domain"/>
</dbReference>
<dbReference type="InterPro" id="IPR040181">
    <property type="entry name" value="PKHG5/7"/>
</dbReference>
<dbReference type="InterPro" id="IPR055251">
    <property type="entry name" value="SOS1_NGEF_PH"/>
</dbReference>
<dbReference type="InterPro" id="IPR029071">
    <property type="entry name" value="Ubiquitin-like_domsf"/>
</dbReference>
<dbReference type="PANTHER" id="PTHR13217:SF11">
    <property type="entry name" value="PLECKSTRIN HOMOLOGY DOMAIN-CONTAINING FAMILY G MEMBER 5"/>
    <property type="match status" value="1"/>
</dbReference>
<dbReference type="PANTHER" id="PTHR13217">
    <property type="entry name" value="PLECKSTRIN HOMOLOGY DOMAIN-CONTAINING FAMILY G MEMBER 7"/>
    <property type="match status" value="1"/>
</dbReference>
<dbReference type="Pfam" id="PF00621">
    <property type="entry name" value="RhoGEF"/>
    <property type="match status" value="1"/>
</dbReference>
<dbReference type="Pfam" id="PF22697">
    <property type="entry name" value="SOS1_NGEF_PH"/>
    <property type="match status" value="1"/>
</dbReference>
<dbReference type="SMART" id="SM00233">
    <property type="entry name" value="PH"/>
    <property type="match status" value="1"/>
</dbReference>
<dbReference type="SMART" id="SM00325">
    <property type="entry name" value="RhoGEF"/>
    <property type="match status" value="1"/>
</dbReference>
<dbReference type="SUPFAM" id="SSF48065">
    <property type="entry name" value="DBL homology domain (DH-domain)"/>
    <property type="match status" value="1"/>
</dbReference>
<dbReference type="SUPFAM" id="SSF50729">
    <property type="entry name" value="PH domain-like"/>
    <property type="match status" value="1"/>
</dbReference>
<dbReference type="SUPFAM" id="SSF54236">
    <property type="entry name" value="Ubiquitin-like"/>
    <property type="match status" value="1"/>
</dbReference>
<dbReference type="PROSITE" id="PS50010">
    <property type="entry name" value="DH_2"/>
    <property type="match status" value="1"/>
</dbReference>
<dbReference type="PROSITE" id="PS50003">
    <property type="entry name" value="PH_DOMAIN"/>
    <property type="match status" value="1"/>
</dbReference>
<accession>Q66T02</accession>
<accession>A2A8B6</accession>
<accession>A2A8B7</accession>
<accession>Q66T00</accession>
<accession>Q6P3B1</accession>
<accession>Q6ZQ62</accession>
<accession>Q8R571</accession>
<keyword id="KW-0025">Alternative splicing</keyword>
<keyword id="KW-0965">Cell junction</keyword>
<keyword id="KW-1003">Cell membrane</keyword>
<keyword id="KW-0966">Cell projection</keyword>
<keyword id="KW-0963">Cytoplasm</keyword>
<keyword id="KW-0472">Membrane</keyword>
<keyword id="KW-0597">Phosphoprotein</keyword>
<keyword id="KW-1185">Reference proteome</keyword>
<gene>
    <name type="primary">Plekhg5</name>
    <name type="synonym">Kiaa0720</name>
    <name type="synonym">Syx</name>
</gene>